<protein>
    <recommendedName>
        <fullName>Genome polyprotein</fullName>
    </recommendedName>
    <component>
        <recommendedName>
            <fullName>P1 protease</fullName>
            <ecNumber>3.4.21.-</ecNumber>
        </recommendedName>
        <alternativeName>
            <fullName>Leader protease P1</fullName>
        </alternativeName>
        <alternativeName>
            <fullName>N-terminal protein</fullName>
        </alternativeName>
        <alternativeName>
            <fullName>P1 proteinase</fullName>
        </alternativeName>
    </component>
    <component>
        <recommendedName>
            <fullName>Helper component proteinase</fullName>
            <shortName>HC-pro</shortName>
            <ecNumber evidence="2">3.4.22.45</ecNumber>
        </recommendedName>
    </component>
    <component>
        <recommendedName>
            <fullName>Protein P3</fullName>
        </recommendedName>
    </component>
    <component>
        <recommendedName>
            <fullName>6 kDa protein 1</fullName>
            <shortName>6K1</shortName>
        </recommendedName>
    </component>
    <component>
        <recommendedName>
            <fullName>Cytoplasmic inclusion protein</fullName>
            <shortName>CI</shortName>
            <ecNumber>3.6.4.-</ecNumber>
        </recommendedName>
    </component>
    <component>
        <recommendedName>
            <fullName>6 kDa protein 2</fullName>
            <shortName>6K2</shortName>
        </recommendedName>
    </component>
    <component>
        <recommendedName>
            <fullName>Viral genome-linked protein</fullName>
        </recommendedName>
        <alternativeName>
            <fullName>VPg</fullName>
        </alternativeName>
    </component>
    <component>
        <recommendedName>
            <fullName>Nuclear inclusion protein A</fullName>
            <shortName>NI-a</shortName>
            <shortName>NIa</shortName>
            <ecNumber>3.4.22.44</ecNumber>
        </recommendedName>
        <alternativeName>
            <fullName>49 kDa proteinase</fullName>
            <shortName>49 kDa-Pro</shortName>
        </alternativeName>
        <alternativeName>
            <fullName>NIa-pro</fullName>
        </alternativeName>
    </component>
    <component>
        <recommendedName>
            <fullName>Nuclear inclusion protein B</fullName>
            <shortName>NI-b</shortName>
            <shortName>NIb</shortName>
            <ecNumber>2.7.7.48</ecNumber>
        </recommendedName>
        <alternativeName>
            <fullName>RNA-directed RNA polymerase</fullName>
        </alternativeName>
    </component>
    <component>
        <recommendedName>
            <fullName>Capsid protein</fullName>
            <shortName>CP</shortName>
        </recommendedName>
        <alternativeName>
            <fullName>Coat protein</fullName>
        </alternativeName>
    </component>
</protein>
<reference key="1">
    <citation type="submission" date="2000-12" db="EMBL/GenBank/DDBJ databases">
        <title>Two genes of soybean mosaic virus are involved in the interaction with the Rsv1 resistance allele of soybean.</title>
        <authorList>
            <person name="Eggenberger A.L."/>
            <person name="Beachy R.N."/>
            <person name="Hill J.H."/>
        </authorList>
    </citation>
    <scope>NUCLEOTIDE SEQUENCE [GENOMIC RNA]</scope>
</reference>
<reference key="2">
    <citation type="journal article" date="1989" name="J. Gen. Virol.">
        <title>The nucleotide sequence of a soybean mosaic virus coat protein-coding region and its expression in Escherichia coli, Agrobacterium tumefaciens and tobacco callus.</title>
        <authorList>
            <person name="Eggenberger A.L."/>
            <person name="Stark D.M."/>
            <person name="Beachy R.N."/>
        </authorList>
    </citation>
    <scope>NUCLEOTIDE SEQUENCE [GENOMIC RNA] OF 2764-3066</scope>
    <scope>PROTEIN SEQUENCE OF 2845-2859</scope>
</reference>
<reference key="3">
    <citation type="journal article" date="2001" name="Virus Res.">
        <title>Potyvirus proteins: a wealth of functions.</title>
        <authorList>
            <person name="Urcuqui-Inchima S."/>
            <person name="Haenni A.L."/>
            <person name="Bernardi F."/>
        </authorList>
    </citation>
    <scope>REVIEW</scope>
</reference>
<reference key="4">
    <citation type="journal article" date="2020" name="Mol. Plant Pathol.">
        <title>Soybean RNA interference lines silenced for eIF4E show broad potyvirus resistance.</title>
        <authorList>
            <person name="Gao L."/>
            <person name="Luo J."/>
            <person name="Ding X."/>
            <person name="Wang T."/>
            <person name="Hu T."/>
            <person name="Song P."/>
            <person name="Zhai R."/>
            <person name="Zhang H."/>
            <person name="Zhang K."/>
            <person name="Li K."/>
            <person name="Zhi H."/>
        </authorList>
    </citation>
    <scope>INTERACTION WITH HOST PLANT EIF4E1 (VIRAL GENOME-LINKED PROTEIN)</scope>
    <scope>INTERACTION WITH HOST PLANT EIF4E1 (NUCLEAR INCLUSION PROTEIN A)</scope>
    <scope>INTERACTION WITH HOST PLANT EIF4E1 (NUCLEAR INCLUSION PROTEIN B)</scope>
    <scope>SUBCELLULAR LOCATION (VIRAL GENOME-LINKED PROTEIN)</scope>
    <scope>SUBCELLULAR LOCATION (NUCLEAR INCLUSION PROTEIN A)</scope>
    <scope>SUBCELLULAR LOCATION (NUCLEAR INCLUSION PROTEIN B)</scope>
    <source>
        <strain>SC3/7/15/18</strain>
        <strain>SMV-R</strain>
    </source>
</reference>
<reference key="5">
    <citation type="journal article" date="2021" name="PLoS ONE">
        <title>Analysis of proteolytic processing sites in potyvirus polyproteins revealed differential amino acid preferences of NIa-Pro protease in each of seven cleavage sites.</title>
        <authorList>
            <person name="Goh C.J."/>
            <person name="Hahn Y."/>
        </authorList>
    </citation>
    <scope>PROTEOLYTIC CLEAVAGE (GENOME POLYPROTEIN)</scope>
</reference>
<feature type="chain" id="PRO_0000420023" description="Genome polyprotein">
    <location>
        <begin position="1"/>
        <end position="3066"/>
    </location>
</feature>
<feature type="chain" id="PRO_0000040438" description="P1 protease" evidence="8">
    <location>
        <begin position="1"/>
        <end position="308"/>
    </location>
</feature>
<feature type="chain" id="PRO_0000040439" description="Helper component proteinase" evidence="8">
    <location>
        <begin position="309"/>
        <end position="765"/>
    </location>
</feature>
<feature type="chain" id="PRO_0000040440" description="Protein P3" evidence="1">
    <location>
        <begin position="766"/>
        <end position="1112"/>
    </location>
</feature>
<feature type="chain" id="PRO_0000040441" description="6 kDa protein 1" evidence="1">
    <location>
        <begin position="1113"/>
        <end position="1164"/>
    </location>
</feature>
<feature type="chain" id="PRO_0000040442" description="Cytoplasmic inclusion protein" evidence="1">
    <location>
        <begin position="1165"/>
        <end position="1798"/>
    </location>
</feature>
<feature type="chain" id="PRO_0000040443" description="6 kDa protein 2" evidence="1">
    <location>
        <begin position="1799"/>
        <end position="1851"/>
    </location>
</feature>
<feature type="chain" id="PRO_0000040444" description="Viral genome-linked protein" evidence="1">
    <location>
        <begin position="1852"/>
        <end position="2041"/>
    </location>
</feature>
<feature type="chain" id="PRO_0000040445" description="Nuclear inclusion protein A" evidence="1">
    <location>
        <begin position="2042"/>
        <end position="2284"/>
    </location>
</feature>
<feature type="chain" id="PRO_0000040446" description="Nuclear inclusion protein B" evidence="1">
    <location>
        <begin position="2285"/>
        <end position="2801"/>
    </location>
</feature>
<feature type="chain" id="PRO_0000040447" description="Capsid protein" evidence="1">
    <location>
        <begin position="2802"/>
        <end position="3066"/>
    </location>
</feature>
<feature type="domain" description="Peptidase S30" evidence="14">
    <location>
        <begin position="168"/>
        <end position="308"/>
    </location>
</feature>
<feature type="domain" description="Peptidase C6" evidence="13">
    <location>
        <begin position="643"/>
        <end position="765"/>
    </location>
</feature>
<feature type="domain" description="Helicase ATP-binding" evidence="10">
    <location>
        <begin position="1236"/>
        <end position="1388"/>
    </location>
</feature>
<feature type="domain" description="Helicase C-terminal" evidence="11">
    <location>
        <begin position="1407"/>
        <end position="1566"/>
    </location>
</feature>
<feature type="domain" description="Peptidase C4" evidence="12">
    <location>
        <begin position="2042"/>
        <end position="2260"/>
    </location>
</feature>
<feature type="domain" description="RdRp catalytic" evidence="9">
    <location>
        <begin position="2526"/>
        <end position="2650"/>
    </location>
</feature>
<feature type="region of interest" description="Disordered" evidence="15">
    <location>
        <begin position="2799"/>
        <end position="2836"/>
    </location>
</feature>
<feature type="short sequence motif" description="Involved in interaction with stylet and aphid transmission" evidence="1">
    <location>
        <begin position="361"/>
        <end position="364"/>
    </location>
</feature>
<feature type="short sequence motif" description="Involved in virions binding and aphid transmission" evidence="1">
    <location>
        <begin position="617"/>
        <end position="619"/>
    </location>
</feature>
<feature type="short sequence motif" description="DECH box">
    <location>
        <begin position="1338"/>
        <end position="1341"/>
    </location>
</feature>
<feature type="short sequence motif" description="Nuclear localization signal" evidence="8">
    <location>
        <begin position="1891"/>
        <end position="1900"/>
    </location>
</feature>
<feature type="compositionally biased region" description="Basic and acidic residues" evidence="15">
    <location>
        <begin position="2803"/>
        <end position="2818"/>
    </location>
</feature>
<feature type="compositionally biased region" description="Low complexity" evidence="15">
    <location>
        <begin position="2819"/>
        <end position="2831"/>
    </location>
</feature>
<feature type="active site" description="For P1 proteinase activity" evidence="14">
    <location>
        <position position="221"/>
    </location>
</feature>
<feature type="active site" description="For P1 proteinase activity" evidence="14">
    <location>
        <position position="230"/>
    </location>
</feature>
<feature type="active site" description="For P1 proteinase activity" evidence="14">
    <location>
        <position position="262"/>
    </location>
</feature>
<feature type="active site" description="For helper component proteinase activity" evidence="13">
    <location>
        <position position="651"/>
    </location>
</feature>
<feature type="active site" description="For helper component proteinase activity" evidence="13">
    <location>
        <position position="724"/>
    </location>
</feature>
<feature type="active site" description="For nuclear inclusion protein A activity" evidence="12">
    <location>
        <position position="2087"/>
    </location>
</feature>
<feature type="active site" description="For nuclear inclusion protein A activity" evidence="12">
    <location>
        <position position="2122"/>
    </location>
</feature>
<feature type="active site" description="For nuclear inclusion protein A activity" evidence="12">
    <location>
        <position position="2192"/>
    </location>
</feature>
<feature type="binding site" evidence="10">
    <location>
        <begin position="1249"/>
        <end position="1256"/>
    </location>
    <ligand>
        <name>ATP</name>
        <dbReference type="ChEBI" id="CHEBI:30616"/>
    </ligand>
</feature>
<feature type="site" description="Cleavage; by P1 proteinase" evidence="14">
    <location>
        <begin position="308"/>
        <end position="309"/>
    </location>
</feature>
<feature type="site" description="Cleavage; by autolysis" evidence="13">
    <location>
        <begin position="765"/>
        <end position="766"/>
    </location>
</feature>
<feature type="site" description="Cleavage; by NIa-pro" evidence="18">
    <location>
        <begin position="1112"/>
        <end position="1113"/>
    </location>
</feature>
<feature type="site" description="Cleavage; by NIa-pro" evidence="18">
    <location>
        <begin position="1164"/>
        <end position="1165"/>
    </location>
</feature>
<feature type="site" description="Cleavage; by NIa-pro" evidence="18">
    <location>
        <begin position="1798"/>
        <end position="1799"/>
    </location>
</feature>
<feature type="site" description="Cleavage; by NIa-pro" evidence="18">
    <location>
        <begin position="1851"/>
        <end position="1852"/>
    </location>
</feature>
<feature type="site" description="Cleavage; by NIa-pro" evidence="18">
    <location>
        <begin position="2041"/>
        <end position="2042"/>
    </location>
</feature>
<feature type="site" description="Cleavage; by NIa-pro" evidence="18">
    <location>
        <begin position="2284"/>
        <end position="2285"/>
    </location>
</feature>
<feature type="site" description="Cleavage; by NIa-pro" evidence="18">
    <location>
        <begin position="2801"/>
        <end position="2802"/>
    </location>
</feature>
<feature type="modified residue" description="O-(5'-phospho-RNA)-tyrosine" evidence="3">
    <location>
        <position position="1915"/>
    </location>
</feature>
<feature type="modified residue" description="Phosphothreonine" evidence="5">
    <location>
        <position position="3048"/>
    </location>
</feature>
<feature type="sequence conflict" description="In Ref. 2; AA sequence." evidence="17" ref="2">
    <original>A</original>
    <variation>L</variation>
    <location>
        <position position="2764"/>
    </location>
</feature>
<accession>P21231</accession>
<dbReference type="EC" id="3.4.21.-"/>
<dbReference type="EC" id="3.4.22.45" evidence="2"/>
<dbReference type="EC" id="3.6.4.-"/>
<dbReference type="EC" id="3.4.22.44"/>
<dbReference type="EC" id="2.7.7.48"/>
<dbReference type="EMBL" id="D00507">
    <property type="protein sequence ID" value="BAA00398.2"/>
    <property type="molecule type" value="Genomic_RNA"/>
</dbReference>
<dbReference type="PIR" id="PS0081">
    <property type="entry name" value="PS0081"/>
</dbReference>
<dbReference type="RefSeq" id="NP_072165.1">
    <property type="nucleotide sequence ID" value="NC_002634.1"/>
</dbReference>
<dbReference type="GeneID" id="918483"/>
<dbReference type="KEGG" id="vg:918483"/>
<dbReference type="Proteomes" id="UP000007016">
    <property type="component" value="Genome"/>
</dbReference>
<dbReference type="GO" id="GO:0019029">
    <property type="term" value="C:helical viral capsid"/>
    <property type="evidence" value="ECO:0007669"/>
    <property type="project" value="UniProtKB-KW"/>
</dbReference>
<dbReference type="GO" id="GO:0044161">
    <property type="term" value="C:host cell cytoplasmic vesicle"/>
    <property type="evidence" value="ECO:0007669"/>
    <property type="project" value="UniProtKB-SubCell"/>
</dbReference>
<dbReference type="GO" id="GO:0042025">
    <property type="term" value="C:host cell nucleus"/>
    <property type="evidence" value="ECO:0007669"/>
    <property type="project" value="UniProtKB-SubCell"/>
</dbReference>
<dbReference type="GO" id="GO:0005524">
    <property type="term" value="F:ATP binding"/>
    <property type="evidence" value="ECO:0007669"/>
    <property type="project" value="UniProtKB-KW"/>
</dbReference>
<dbReference type="GO" id="GO:0004197">
    <property type="term" value="F:cysteine-type endopeptidase activity"/>
    <property type="evidence" value="ECO:0007669"/>
    <property type="project" value="InterPro"/>
</dbReference>
<dbReference type="GO" id="GO:0004386">
    <property type="term" value="F:helicase activity"/>
    <property type="evidence" value="ECO:0007669"/>
    <property type="project" value="UniProtKB-KW"/>
</dbReference>
<dbReference type="GO" id="GO:0016818">
    <property type="term" value="F:hydrolase activity, acting on acid anhydrides, in phosphorus-containing anhydrides"/>
    <property type="evidence" value="ECO:0007669"/>
    <property type="project" value="InterPro"/>
</dbReference>
<dbReference type="GO" id="GO:0003723">
    <property type="term" value="F:RNA binding"/>
    <property type="evidence" value="ECO:0007669"/>
    <property type="project" value="InterPro"/>
</dbReference>
<dbReference type="GO" id="GO:0003968">
    <property type="term" value="F:RNA-directed RNA polymerase activity"/>
    <property type="evidence" value="ECO:0007669"/>
    <property type="project" value="UniProtKB-KW"/>
</dbReference>
<dbReference type="GO" id="GO:0008236">
    <property type="term" value="F:serine-type peptidase activity"/>
    <property type="evidence" value="ECO:0007669"/>
    <property type="project" value="UniProtKB-KW"/>
</dbReference>
<dbReference type="GO" id="GO:0005198">
    <property type="term" value="F:structural molecule activity"/>
    <property type="evidence" value="ECO:0007669"/>
    <property type="project" value="InterPro"/>
</dbReference>
<dbReference type="GO" id="GO:0006351">
    <property type="term" value="P:DNA-templated transcription"/>
    <property type="evidence" value="ECO:0007669"/>
    <property type="project" value="InterPro"/>
</dbReference>
<dbReference type="GO" id="GO:0006508">
    <property type="term" value="P:proteolysis"/>
    <property type="evidence" value="ECO:0007669"/>
    <property type="project" value="UniProtKB-KW"/>
</dbReference>
<dbReference type="GO" id="GO:0052170">
    <property type="term" value="P:symbiont-mediated suppression of host innate immune response"/>
    <property type="evidence" value="ECO:0007669"/>
    <property type="project" value="UniProtKB-KW"/>
</dbReference>
<dbReference type="GO" id="GO:0039694">
    <property type="term" value="P:viral RNA genome replication"/>
    <property type="evidence" value="ECO:0007669"/>
    <property type="project" value="InterPro"/>
</dbReference>
<dbReference type="GO" id="GO:0075523">
    <property type="term" value="P:viral translational frameshifting"/>
    <property type="evidence" value="ECO:0007669"/>
    <property type="project" value="UniProtKB-KW"/>
</dbReference>
<dbReference type="CDD" id="cd23175">
    <property type="entry name" value="ps-ssRNAv_Potyviridae_RdRp"/>
    <property type="match status" value="1"/>
</dbReference>
<dbReference type="Gene3D" id="3.30.70.270">
    <property type="match status" value="1"/>
</dbReference>
<dbReference type="Gene3D" id="3.90.70.150">
    <property type="entry name" value="Helper component proteinase"/>
    <property type="match status" value="1"/>
</dbReference>
<dbReference type="Gene3D" id="3.40.50.300">
    <property type="entry name" value="P-loop containing nucleotide triphosphate hydrolases"/>
    <property type="match status" value="2"/>
</dbReference>
<dbReference type="Gene3D" id="2.40.10.10">
    <property type="entry name" value="Trypsin-like serine proteases"/>
    <property type="match status" value="2"/>
</dbReference>
<dbReference type="InterPro" id="IPR011545">
    <property type="entry name" value="DEAD/DEAH_box_helicase_dom"/>
</dbReference>
<dbReference type="InterPro" id="IPR043502">
    <property type="entry name" value="DNA/RNA_pol_sf"/>
</dbReference>
<dbReference type="InterPro" id="IPR001456">
    <property type="entry name" value="HC-pro"/>
</dbReference>
<dbReference type="InterPro" id="IPR031159">
    <property type="entry name" value="HC_PRO_CPD_dom"/>
</dbReference>
<dbReference type="InterPro" id="IPR042308">
    <property type="entry name" value="HC_PRO_CPD_sf"/>
</dbReference>
<dbReference type="InterPro" id="IPR014001">
    <property type="entry name" value="Helicase_ATP-bd"/>
</dbReference>
<dbReference type="InterPro" id="IPR001650">
    <property type="entry name" value="Helicase_C-like"/>
</dbReference>
<dbReference type="InterPro" id="IPR027417">
    <property type="entry name" value="P-loop_NTPase"/>
</dbReference>
<dbReference type="InterPro" id="IPR002540">
    <property type="entry name" value="Pept_S30_P1_potyvir"/>
</dbReference>
<dbReference type="InterPro" id="IPR009003">
    <property type="entry name" value="Peptidase_S1_PA"/>
</dbReference>
<dbReference type="InterPro" id="IPR043504">
    <property type="entry name" value="Peptidase_S1_PA_chymotrypsin"/>
</dbReference>
<dbReference type="InterPro" id="IPR001592">
    <property type="entry name" value="Poty_coat"/>
</dbReference>
<dbReference type="InterPro" id="IPR001730">
    <property type="entry name" value="Potyv_NIa-pro_dom"/>
</dbReference>
<dbReference type="InterPro" id="IPR039560">
    <property type="entry name" value="Potyvirid-P3"/>
</dbReference>
<dbReference type="InterPro" id="IPR013648">
    <property type="entry name" value="PP_Potyviridae"/>
</dbReference>
<dbReference type="InterPro" id="IPR043128">
    <property type="entry name" value="Rev_trsase/Diguanyl_cyclase"/>
</dbReference>
<dbReference type="InterPro" id="IPR001205">
    <property type="entry name" value="RNA-dir_pol_C"/>
</dbReference>
<dbReference type="InterPro" id="IPR007094">
    <property type="entry name" value="RNA-dir_pol_PSvirus"/>
</dbReference>
<dbReference type="PANTHER" id="PTHR43519">
    <property type="entry name" value="ATP-DEPENDENT RNA HELICASE HRPB"/>
    <property type="match status" value="1"/>
</dbReference>
<dbReference type="PANTHER" id="PTHR43519:SF1">
    <property type="entry name" value="ATP-DEPENDENT RNA HELICASE HRPB"/>
    <property type="match status" value="1"/>
</dbReference>
<dbReference type="Pfam" id="PF00270">
    <property type="entry name" value="DEAD"/>
    <property type="match status" value="1"/>
</dbReference>
<dbReference type="Pfam" id="PF00271">
    <property type="entry name" value="Helicase_C"/>
    <property type="match status" value="1"/>
</dbReference>
<dbReference type="Pfam" id="PF00863">
    <property type="entry name" value="Peptidase_C4"/>
    <property type="match status" value="1"/>
</dbReference>
<dbReference type="Pfam" id="PF00851">
    <property type="entry name" value="Peptidase_C6"/>
    <property type="match status" value="1"/>
</dbReference>
<dbReference type="Pfam" id="PF01577">
    <property type="entry name" value="Peptidase_S30"/>
    <property type="match status" value="1"/>
</dbReference>
<dbReference type="Pfam" id="PF00767">
    <property type="entry name" value="Poty_coat"/>
    <property type="match status" value="1"/>
</dbReference>
<dbReference type="Pfam" id="PF08440">
    <property type="entry name" value="Poty_PP"/>
    <property type="match status" value="1"/>
</dbReference>
<dbReference type="Pfam" id="PF13608">
    <property type="entry name" value="Potyvirid-P3"/>
    <property type="match status" value="1"/>
</dbReference>
<dbReference type="Pfam" id="PF00680">
    <property type="entry name" value="RdRP_1"/>
    <property type="match status" value="1"/>
</dbReference>
<dbReference type="PRINTS" id="PR00966">
    <property type="entry name" value="NIAPOTYPTASE"/>
</dbReference>
<dbReference type="SMART" id="SM00487">
    <property type="entry name" value="DEXDc"/>
    <property type="match status" value="1"/>
</dbReference>
<dbReference type="SMART" id="SM00490">
    <property type="entry name" value="HELICc"/>
    <property type="match status" value="1"/>
</dbReference>
<dbReference type="SUPFAM" id="SSF56672">
    <property type="entry name" value="DNA/RNA polymerases"/>
    <property type="match status" value="1"/>
</dbReference>
<dbReference type="SUPFAM" id="SSF52540">
    <property type="entry name" value="P-loop containing nucleoside triphosphate hydrolases"/>
    <property type="match status" value="2"/>
</dbReference>
<dbReference type="SUPFAM" id="SSF50494">
    <property type="entry name" value="Trypsin-like serine proteases"/>
    <property type="match status" value="1"/>
</dbReference>
<dbReference type="PROSITE" id="PS51744">
    <property type="entry name" value="HC_PRO_CPD"/>
    <property type="match status" value="1"/>
</dbReference>
<dbReference type="PROSITE" id="PS51192">
    <property type="entry name" value="HELICASE_ATP_BIND_1"/>
    <property type="match status" value="1"/>
</dbReference>
<dbReference type="PROSITE" id="PS51194">
    <property type="entry name" value="HELICASE_CTER"/>
    <property type="match status" value="1"/>
</dbReference>
<dbReference type="PROSITE" id="PS51436">
    <property type="entry name" value="POTYVIRUS_NIA_PRO"/>
    <property type="match status" value="1"/>
</dbReference>
<dbReference type="PROSITE" id="PS51871">
    <property type="entry name" value="PV_P1_PRO"/>
    <property type="match status" value="1"/>
</dbReference>
<dbReference type="PROSITE" id="PS50507">
    <property type="entry name" value="RDRP_SSRNA_POS"/>
    <property type="match status" value="1"/>
</dbReference>
<comment type="function">
    <molecule>Helper component proteinase</molecule>
    <text evidence="2">Required for aphid transmission and also has proteolytic activity. Only cleaves a Gly-Gly dipeptide at its own C-terminus. Interacts with virions and aphid stylets. Acts as a suppressor of RNA-mediated gene silencing, also known as post-transcriptional gene silencing (PTGS), a mechanism of plant viral defense that limits the accumulation of viral RNAs. May have RNA-binding activity.</text>
</comment>
<comment type="function">
    <molecule>Cytoplasmic inclusion protein</molecule>
    <text>Has helicase activity. It may be involved in replication.</text>
</comment>
<comment type="function">
    <molecule>6 kDa protein 1</molecule>
    <text evidence="4 7">Indispensable for virus replication (By similarity). Reduces the abundance of host transcripts related to jasmonic acid biosynthesis therefore altering the host defenses (By similarity). In order to increase its own stability, decreases host protein degradation pathways (By similarity).</text>
</comment>
<comment type="function">
    <molecule>6 kDa protein 2</molecule>
    <text evidence="3">Indispensable for virus replication.</text>
</comment>
<comment type="function">
    <molecule>Viral genome-linked protein</molecule>
    <text evidence="6">Mediates the cap-independent, EIF4E-dependent translation of viral genomic RNAs (By similarity). Binds to the cap-binding site of host EIF4E and thus interferes with the host EIF4E-dependent mRNA export and translation (By similarity). VPg-RNA directly binds EIF4E and is a template for transcription (By similarity). Also forms trimeric complexes with EIF4E-EIF4G, which are templates for translation (By similarity).</text>
</comment>
<comment type="function">
    <molecule>Nuclear inclusion protein A</molecule>
    <text evidence="2">Has RNA-binding and proteolytic activities.</text>
</comment>
<comment type="function">
    <molecule>Nuclear inclusion protein B</molecule>
    <text>An RNA-dependent RNA polymerase that plays an essential role in the virus replication.</text>
</comment>
<comment type="function">
    <molecule>Capsid protein</molecule>
    <text evidence="2">Involved in aphid transmission, cell-to-cell and systemis movement, encapsidation of the viral RNA and in the regulation of viral RNA amplification.</text>
</comment>
<comment type="catalytic activity">
    <molecule>Nuclear inclusion protein B</molecule>
    <reaction evidence="9">
        <text>RNA(n) + a ribonucleoside 5'-triphosphate = RNA(n+1) + diphosphate</text>
        <dbReference type="Rhea" id="RHEA:21248"/>
        <dbReference type="Rhea" id="RHEA-COMP:14527"/>
        <dbReference type="Rhea" id="RHEA-COMP:17342"/>
        <dbReference type="ChEBI" id="CHEBI:33019"/>
        <dbReference type="ChEBI" id="CHEBI:61557"/>
        <dbReference type="ChEBI" id="CHEBI:140395"/>
        <dbReference type="EC" id="2.7.7.48"/>
    </reaction>
</comment>
<comment type="catalytic activity">
    <molecule>Nuclear inclusion protein A</molecule>
    <reaction evidence="2">
        <text>Hydrolyzes glutaminyl bonds, and activity is further restricted by preferences for the amino acids in P6 - P1' that vary with the species of potyvirus, e.g. Glu-Xaa-Xaa-Tyr-Xaa-Gln-|-(Ser or Gly) for the enzyme from tobacco etch virus. The natural substrate is the viral polyprotein, but other proteins and oligopeptides containing the appropriate consensus sequence are also cleaved.</text>
        <dbReference type="EC" id="3.4.22.44"/>
    </reaction>
</comment>
<comment type="catalytic activity">
    <molecule>Helper component proteinase</molecule>
    <reaction evidence="2">
        <text>Hydrolyzes a Gly-|-Gly bond at its own C-terminus, commonly in the sequence -Tyr-Xaa-Val-Gly-|-Gly, in the processing of the potyviral polyprotein.</text>
        <dbReference type="EC" id="3.4.22.45"/>
    </reaction>
</comment>
<comment type="subunit">
    <molecule>Viral genome-linked protein</molecule>
    <text evidence="6">Interacts with host eIF4E protein (via cap-binding region); this interaction mediates the translation of the VPg-viral RNA conjugates (By similarity). Part of a complex that comprises VPg, RNA, host EIF4E and EIF4G; this interaction mediates the translation of the VPg-viral RNA conjugates (By similarity).</text>
</comment>
<comment type="subunit">
    <molecule>Nuclear inclusion protein A</molecule>
    <text evidence="16">Interacts with host eIF4E proteins in the host cytoplasm.</text>
</comment>
<comment type="subunit">
    <molecule>Nuclear inclusion protein B</molecule>
    <text evidence="16">Interacts with host eIF4E proteins in the host cytoplasm.</text>
</comment>
<comment type="subcellular location">
    <molecule>6 kDa protein 1</molecule>
    <subcellularLocation>
        <location>Host cytoplasmic vesicle</location>
    </subcellularLocation>
    <text evidence="4">Probably colocalizes with 6K2-induced vesicles associated with host chloroplasts.</text>
</comment>
<comment type="subcellular location">
    <molecule>6 kDa protein 2</molecule>
    <subcellularLocation>
        <location evidence="3">Host cytoplasmic vesicle</location>
    </subcellularLocation>
    <text evidence="3">6K-induced vesicles associate with host chloroplasts.</text>
</comment>
<comment type="subcellular location">
    <molecule>Nuclear inclusion protein A</molecule>
    <subcellularLocation>
        <location evidence="16">Host cytoplasm</location>
    </subcellularLocation>
    <text evidence="16">Binds to host plant eIF4E proteins in the host cytoplasm.</text>
</comment>
<comment type="subcellular location">
    <molecule>Nuclear inclusion protein B</molecule>
    <subcellularLocation>
        <location evidence="16">Host cytoplasm</location>
    </subcellularLocation>
    <text evidence="16">Binds to host plant eIF4E proteins in the host cytoplasm.</text>
</comment>
<comment type="subcellular location">
    <molecule>Viral genome-linked protein</molecule>
    <subcellularLocation>
        <location evidence="16">Host nucleus</location>
    </subcellularLocation>
    <text evidence="16">Binds to host plant eIF4E proteins in the host nucleus.</text>
</comment>
<comment type="subcellular location">
    <molecule>Capsid protein</molecule>
    <subcellularLocation>
        <location evidence="17">Virion</location>
    </subcellularLocation>
</comment>
<comment type="alternative products">
    <event type="ribosomal frameshifting"/>
    <isoform>
        <id>P21231-1</id>
        <name>Genome polyprotein</name>
        <sequence type="displayed"/>
    </isoform>
    <isoform>
        <id>P0CK08-1</id>
        <name>P3N-PIPO polyprotein</name>
        <sequence type="external"/>
    </isoform>
</comment>
<comment type="domain">
    <molecule>Helper component proteinase</molecule>
    <text>The N-terminus is involved in interaction with stylets. The central part is involved in interaction with virions and the C-terminus is involved in cell-to cell movement of the virus.</text>
</comment>
<comment type="PTM">
    <molecule>Viral genome-linked protein</molecule>
    <text evidence="3">VPg is uridylylated by the polymerase and is covalently attached to the 5'-end of the genomic RNA. This uridylylated form acts as a nucleotide-peptide primer for the polymerase (By similarity).</text>
</comment>
<comment type="PTM">
    <molecule>Genome polyprotein</molecule>
    <text evidence="1">Potyviral RNA is expressed as two polyproteins which undergo post-translational proteolytic processing. Genome polyprotein is processed by NIa-pro, P1 and HC-pro proteinases resulting in the production of at least ten individual proteins. P3N-PIPO polyprotein is cleaved by P1 and HC-pro proteinases resulting in the production of three individual proteins. The P1 proteinase and the HC-pro cleave only their respective C-termini autocatalytically. 6K1 is essential for proper proteolytic separation of P3 from CI (By similarity).</text>
</comment>
<comment type="miscellaneous">
    <molecule>Isoform Genome polyprotein</molecule>
    <text>Produced by conventional translation.</text>
</comment>
<comment type="similarity">
    <text evidence="17">Belongs to the potyviridae genome polyprotein family.</text>
</comment>
<keyword id="KW-0067">ATP-binding</keyword>
<keyword id="KW-0167">Capsid protein</keyword>
<keyword id="KW-0191">Covalent protein-RNA linkage</keyword>
<keyword id="KW-0903">Direct protein sequencing</keyword>
<keyword id="KW-1139">Helical capsid protein</keyword>
<keyword id="KW-0347">Helicase</keyword>
<keyword id="KW-1035">Host cytoplasm</keyword>
<keyword id="KW-1036">Host cytoplasmic vesicle</keyword>
<keyword id="KW-1048">Host nucleus</keyword>
<keyword id="KW-0945">Host-virus interaction</keyword>
<keyword id="KW-0378">Hydrolase</keyword>
<keyword id="KW-1090">Inhibition of host innate immune response by virus</keyword>
<keyword id="KW-0547">Nucleotide-binding</keyword>
<keyword id="KW-0548">Nucleotidyltransferase</keyword>
<keyword id="KW-0597">Phosphoprotein</keyword>
<keyword id="KW-0645">Protease</keyword>
<keyword id="KW-1185">Reference proteome</keyword>
<keyword id="KW-0688">Ribosomal frameshifting</keyword>
<keyword id="KW-0696">RNA-directed RNA polymerase</keyword>
<keyword id="KW-0720">Serine protease</keyword>
<keyword id="KW-0941">Suppressor of RNA silencing</keyword>
<keyword id="KW-0788">Thiol protease</keyword>
<keyword id="KW-0808">Transferase</keyword>
<keyword id="KW-0899">Viral immunoevasion</keyword>
<keyword id="KW-0693">Viral RNA replication</keyword>
<keyword id="KW-0946">Virion</keyword>
<name>POLG_SBMVN</name>
<evidence type="ECO:0000250" key="1"/>
<evidence type="ECO:0000250" key="2">
    <source>
        <dbReference type="UniProtKB" id="P04517"/>
    </source>
</evidence>
<evidence type="ECO:0000250" key="3">
    <source>
        <dbReference type="UniProtKB" id="P09814"/>
    </source>
</evidence>
<evidence type="ECO:0000250" key="4">
    <source>
        <dbReference type="UniProtKB" id="P13529"/>
    </source>
</evidence>
<evidence type="ECO:0000250" key="5">
    <source>
        <dbReference type="UniProtKB" id="P17767"/>
    </source>
</evidence>
<evidence type="ECO:0000250" key="6">
    <source>
        <dbReference type="UniProtKB" id="P18247"/>
    </source>
</evidence>
<evidence type="ECO:0000250" key="7">
    <source>
        <dbReference type="UniProtKB" id="P89509"/>
    </source>
</evidence>
<evidence type="ECO:0000255" key="8"/>
<evidence type="ECO:0000255" key="9">
    <source>
        <dbReference type="PROSITE-ProRule" id="PRU00539"/>
    </source>
</evidence>
<evidence type="ECO:0000255" key="10">
    <source>
        <dbReference type="PROSITE-ProRule" id="PRU00541"/>
    </source>
</evidence>
<evidence type="ECO:0000255" key="11">
    <source>
        <dbReference type="PROSITE-ProRule" id="PRU00542"/>
    </source>
</evidence>
<evidence type="ECO:0000255" key="12">
    <source>
        <dbReference type="PROSITE-ProRule" id="PRU00766"/>
    </source>
</evidence>
<evidence type="ECO:0000255" key="13">
    <source>
        <dbReference type="PROSITE-ProRule" id="PRU01080"/>
    </source>
</evidence>
<evidence type="ECO:0000255" key="14">
    <source>
        <dbReference type="PROSITE-ProRule" id="PRU01219"/>
    </source>
</evidence>
<evidence type="ECO:0000256" key="15">
    <source>
        <dbReference type="SAM" id="MobiDB-lite"/>
    </source>
</evidence>
<evidence type="ECO:0000269" key="16">
    <source>
    </source>
</evidence>
<evidence type="ECO:0000305" key="17"/>
<evidence type="ECO:0000305" key="18">
    <source>
    </source>
</evidence>
<organismHost>
    <name type="scientific">Glycine max</name>
    <name type="common">Soybean</name>
    <name type="synonym">Glycine hispida</name>
    <dbReference type="NCBI Taxonomy" id="3847"/>
</organismHost>
<sequence length="3066" mass="349846">MATIMIGSMAISVPNTHVSCASNSVMPVQAVQMAKQVPSARGVLYTLKREGSTQVHKHEEALRKFQEAFDQDVGIQRRLLVNKHSSIQSTKKNGLTLRRLTLEQARAKEAAIARRKQEEEDFLNGKYEQQFYAGVSATKSMKFEGGSVGFRTKYWRPTPKKTKERRATSQCRKPTYVLEEVLSIASKSGKLVEFITGKGKRVKVCYVRKHGAILPKFSLPHEEGKYIHQELQYASTYEFLPYICMFAKYKSINADDITYGDSGLLFDERSSLTTNHTKLPYFVVRGRRNGKLVNALEVVENMEDIQHYSQNPEAQFFRGWKKVFDKMPPHVENHECTTDFTNEQCGELAAAISQSIFPVKKLSCKQCRQHIKHLSWEEYKQFLLAHMGCHGPEWETFQEIDGMRYVKRVIETSTAENASLQTSLEIVRLTQNYKSTHMLQIQDINKALMKGPSVTQSELEQASKQLLAMTQWWKNHMTLTDEDALKVFRNKRSSKALLNPSLLCDNQLDKNGNFVWGERGRHSKRFFANYFEEVVPSEGYSKYVIRKNPNGQRELAIGSLIVPLDFERARMALQGKSVTREPITMSCISRQDGNFVYPCCCVTHDDGKAFYSELRSPTKRHLVIGTSGDPKYIDLPATDADRMYIAKEGFCYLNIFLAMLVNVNEDEAKDFTKMVRDVIVPRLGKWPTMLDVATAAYMLTVFHPETRNAELPRILVDHACQTMHVIDSFGSLTVGYHVLKAGTVNQLIQFASNDLQSEMKFYRVGGEVQQRMKCETALITSIFKPKRMIQILENDPYILLMGLVSPSILIHMYRMKHFEKGVELWISKEHSVAKIFIILEQLTKRVAANDVLLEQLEMISETSERFMSILEDCPQAPHSYKTAKDLLTMYIERKASNNQLVENGFVDMNDKLYMAYEKIYSDRLKQEWRALSWLEKFSITWQLKRFAPHTEKCLTKKVVEESSASSGNFASVCFMNAQSHLRNVRNTLFQKCDQVWTASVRAFVKLIISTLHRCYSDIVYLVNICIIFSLLVQMTSVLQGIVNTVRRDKALLSGWKRKEDEEAVIHLYEMCEKMEGGHPSIEKFLDHVKGVRPDLLPVAVSMTGQSEDVSAQAKTATQLQLEKIVAFMALLTMCIDNERSDAVFKVLSKLKAFFSTMGEDVKVQSLDEIQSIDEDKKLTIDFDLETNKESSSVSFDVKFEAWWNRQLEQNRVIPHYRSTGEFLEFTRETAAKIANLVATSSHTEFLIRGAVGSGKSTGLPHHLSKKGKVLLLEPTRPLAENVSKQLSFEPFYHNVTLRMRGMSKFGSSNIVVMTSGFAFHYYVNNPQQLSDFDFIIIDECHVQDSPTIAFNCALKEFEFSGKLIKVSATPPGRECEFTTQHPVKLKVEDHLSFQNFVQAQGTGSNADMIQHGNNLLVYVASYNEVDQLSRLLTEKHYKVTKVDGRTMQMGNVEIATTGTEGKPHFIVATNIIENGVTLDIDCVIDFGLKVVATLDTDNRCVRYNKQSVSYGERIQRLGRVGRCKPGFALRIGHTGKGVEEVPEFIATEAAFLSFAYGLPVTTQSVSTNILSRCTVKQARVALNFELTPFFTTNFIKYDGSMHPEIHRLLKSYKLRESEMLLTKIAIPYQFVGQWVTVKEYERQGIHLNCPEKVKIPFYVHGIPDKLYEMLWDTVCKYKNDAGFGSVKSVNATKISYTLSTDPTAIPRTLAILDHLLSEEMTKKSHFDTIGSAVTGYSFSLAGIADGFRKRYLKDYTQHNIAVLQQAKAQLLEFDCNKVDINNLHNVEGIGILNAVQLQSKHEVSKFLQLKGKWDGKKFMNDAVVAIFTLVGGGWMLWDYFTRVIREPVSTQGKKRQIQKLKFRDAFDRKIGREVYADDYTMEHTFGEAYTKKGKQKGSTRTKGMGRKSRNFIHLYGVEPENYSMIRFVDPLTGHTMDEHPRVDIRMVQQEFEEIRKDMIGEGELDRQRVYHNPGLQAYFIGKNTEEALKVDLTPHRPTLLCQNSNAIAGFPEREDELRQTGLPQVVSKSDVPRAKERVEMESKSVYKGLRDYSGISTLICQLTNSSDGHKETMFGVGYGSFIITNGHLFRRNNGMLTVKTWHGEFVIHNTTQLKIHFIQGKDVILIRMPKDFPPFGKRNLFRQPKREERVCMVGTNFQEKSLRATVSESSMILPEGKGSFWIHWITTQDGFCGLPLVSVNDGHIVGIHGLTSNDSEKNFFVPLTDGFEKEYLENADNLSWDKHWFWEPSKIAWGSLNLVEEQPKEEFKISKLVSDLFGNTVTVQGRKERWVLDAMEGNLAACGQADSALVTKHVVKGKCPYFAQYLSVNQEAKSFFEPLMGAYQPSRLNKDAFKRDFFKYNKPVVLNEVDFQSFERAVAGVKLMMMEFDFKECVYVTDPDEIYDSLNMKAAVGAQYKGKKQDYFSGMDSFDKERLLYLSCERLFYGEKGVWNGSLKAELRPIEKVQANKTRTFTAAPIDTLLGAKVCVDDFNNQFYSLNLTCPWTVGMTKFYRGWDKLMRSLPDGWVYCHADGSQFDSSLTPLLLNAVLDVRSFFMEDWWVGREMLENLYAEIVYTPILAPDGTIFKKFRGNNSGQPSTVVDNTLMVVIAMYYSCCKQGWSEEDIQERLVFFANGDDIILAVSDKDTWLYDTLSTSFAELGLNYNFEERTKKREELWFMSHKAVLVDGIYIPKLEPERIVSILEWDRSKELMHRTEAICASMIEAWGYTELLQEIRKFYLWLLNKDEFKELASSGKAPYIAETALRKLYTDVNAQTSELQRYLEVLDFNHADDCCESVSLQSGKEKEGDMDADKDPKKSTSSSKGAGTSSKDVNVGSKGKVVPRLQKITRKMNLPMVEGKIILSLDHLLEYKPNQVDLFNTRATRTQFEAWYNAVKDEYELDDEQMGVVMNGFMVWCIDNGTSPDANGVWVMMDGEEQIEYPLKPIVENAKPTLRQIMHHFSDAAEAYIEMRNSESPYMPRYGLLRNLRDRELARYAFDFYEVTSKTPNRAREAIAQMKAAALSGVNNKLFGLDGNISTNSENTERHTARDVNQNMHTLLGMGPPQ</sequence>
<proteinExistence type="evidence at protein level"/>
<organism>
    <name type="scientific">Soybean mosaic virus (strain N)</name>
    <name type="common">SMV</name>
    <dbReference type="NCBI Taxonomy" id="12223"/>
    <lineage>
        <taxon>Viruses</taxon>
        <taxon>Riboviria</taxon>
        <taxon>Orthornavirae</taxon>
        <taxon>Pisuviricota</taxon>
        <taxon>Stelpaviricetes</taxon>
        <taxon>Patatavirales</taxon>
        <taxon>Potyviridae</taxon>
        <taxon>Potyvirus</taxon>
        <taxon>Potyvirus glycitessellati</taxon>
        <taxon>Soybean mosaic virus</taxon>
    </lineage>
</organism>